<comment type="function">
    <text evidence="2">Mitochondrial GTPase that catalyzes the GTP-dependent ribosomal translocation step during translation elongation. During this step, the ribosome changes from the pre-translocational (PRE) to the post-translocational (POST) state as the newly formed A-site-bound peptidyl-tRNA and P-site-bound deacylated tRNA move to the P and E sites, respectively. Catalyzes the coordinated movement of the two tRNA molecules, the mRNA and conformational changes in the ribosome.</text>
</comment>
<comment type="catalytic activity">
    <reaction evidence="1">
        <text>GTP + H2O = GDP + phosphate + H(+)</text>
        <dbReference type="Rhea" id="RHEA:19669"/>
        <dbReference type="ChEBI" id="CHEBI:15377"/>
        <dbReference type="ChEBI" id="CHEBI:15378"/>
        <dbReference type="ChEBI" id="CHEBI:37565"/>
        <dbReference type="ChEBI" id="CHEBI:43474"/>
        <dbReference type="ChEBI" id="CHEBI:58189"/>
    </reaction>
    <physiologicalReaction direction="left-to-right" evidence="1">
        <dbReference type="Rhea" id="RHEA:19670"/>
    </physiologicalReaction>
</comment>
<comment type="pathway">
    <text evidence="2">Protein biosynthesis; polypeptide chain elongation.</text>
</comment>
<comment type="subcellular location">
    <subcellularLocation>
        <location evidence="2">Mitochondrion</location>
    </subcellularLocation>
</comment>
<comment type="similarity">
    <text evidence="3">Belongs to the TRAFAC class translation factor GTPase superfamily. Classic translation factor GTPase family. EF-G/EF-2 subfamily.</text>
</comment>
<dbReference type="EC" id="3.6.5.-" evidence="1"/>
<dbReference type="EMBL" id="HE601438">
    <property type="protein sequence ID" value="CAP23800.2"/>
    <property type="molecule type" value="Genomic_DNA"/>
</dbReference>
<dbReference type="SMR" id="A8WTI8"/>
<dbReference type="FunCoup" id="A8WTI8">
    <property type="interactions" value="2622"/>
</dbReference>
<dbReference type="STRING" id="6238.A8WTI8"/>
<dbReference type="WormBase" id="CBG02783">
    <property type="protein sequence ID" value="CBP00591"/>
    <property type="gene ID" value="WBGene00025768"/>
    <property type="gene designation" value="Cbr-gfm-1"/>
</dbReference>
<dbReference type="eggNOG" id="KOG0465">
    <property type="taxonomic scope" value="Eukaryota"/>
</dbReference>
<dbReference type="HOGENOM" id="CLU_002794_4_1_1"/>
<dbReference type="InParanoid" id="A8WTI8"/>
<dbReference type="OMA" id="GQFAKVQ"/>
<dbReference type="UniPathway" id="UPA00345"/>
<dbReference type="Proteomes" id="UP000008549">
    <property type="component" value="Unassembled WGS sequence"/>
</dbReference>
<dbReference type="GO" id="GO:0005739">
    <property type="term" value="C:mitochondrion"/>
    <property type="evidence" value="ECO:0000318"/>
    <property type="project" value="GO_Central"/>
</dbReference>
<dbReference type="GO" id="GO:0005525">
    <property type="term" value="F:GTP binding"/>
    <property type="evidence" value="ECO:0007669"/>
    <property type="project" value="UniProtKB-UniRule"/>
</dbReference>
<dbReference type="GO" id="GO:0003924">
    <property type="term" value="F:GTPase activity"/>
    <property type="evidence" value="ECO:0000250"/>
    <property type="project" value="UniProtKB"/>
</dbReference>
<dbReference type="GO" id="GO:0003746">
    <property type="term" value="F:translation elongation factor activity"/>
    <property type="evidence" value="ECO:0000250"/>
    <property type="project" value="UniProtKB"/>
</dbReference>
<dbReference type="GO" id="GO:0070125">
    <property type="term" value="P:mitochondrial translational elongation"/>
    <property type="evidence" value="ECO:0000250"/>
    <property type="project" value="UniProtKB"/>
</dbReference>
<dbReference type="CDD" id="cd01886">
    <property type="entry name" value="EF-G"/>
    <property type="match status" value="1"/>
</dbReference>
<dbReference type="CDD" id="cd16262">
    <property type="entry name" value="EFG_III"/>
    <property type="match status" value="1"/>
</dbReference>
<dbReference type="CDD" id="cd04091">
    <property type="entry name" value="mtEFG1_II_like"/>
    <property type="match status" value="1"/>
</dbReference>
<dbReference type="FunFam" id="3.30.70.870:FF:000001">
    <property type="entry name" value="Elongation factor G"/>
    <property type="match status" value="1"/>
</dbReference>
<dbReference type="FunFam" id="2.40.30.10:FF:000022">
    <property type="entry name" value="Elongation factor G, mitochondrial"/>
    <property type="match status" value="1"/>
</dbReference>
<dbReference type="FunFam" id="3.40.50.300:FF:002874">
    <property type="entry name" value="Elongation factor G, mitochondrial"/>
    <property type="match status" value="1"/>
</dbReference>
<dbReference type="Gene3D" id="3.30.230.10">
    <property type="match status" value="2"/>
</dbReference>
<dbReference type="Gene3D" id="3.30.70.240">
    <property type="match status" value="1"/>
</dbReference>
<dbReference type="Gene3D" id="3.30.70.870">
    <property type="entry name" value="Elongation Factor G (Translational Gtpase), domain 3"/>
    <property type="match status" value="1"/>
</dbReference>
<dbReference type="Gene3D" id="3.40.50.300">
    <property type="entry name" value="P-loop containing nucleotide triphosphate hydrolases"/>
    <property type="match status" value="1"/>
</dbReference>
<dbReference type="Gene3D" id="2.40.30.10">
    <property type="entry name" value="Translation factors"/>
    <property type="match status" value="1"/>
</dbReference>
<dbReference type="HAMAP" id="MF_00054_B">
    <property type="entry name" value="EF_G_EF_2_B"/>
    <property type="match status" value="1"/>
</dbReference>
<dbReference type="InterPro" id="IPR041095">
    <property type="entry name" value="EFG_II"/>
</dbReference>
<dbReference type="InterPro" id="IPR009022">
    <property type="entry name" value="EFG_III"/>
</dbReference>
<dbReference type="InterPro" id="IPR035647">
    <property type="entry name" value="EFG_III/V"/>
</dbReference>
<dbReference type="InterPro" id="IPR000640">
    <property type="entry name" value="EFG_V-like"/>
</dbReference>
<dbReference type="InterPro" id="IPR004161">
    <property type="entry name" value="EFTu-like_2"/>
</dbReference>
<dbReference type="InterPro" id="IPR031157">
    <property type="entry name" value="G_TR_CS"/>
</dbReference>
<dbReference type="InterPro" id="IPR027417">
    <property type="entry name" value="P-loop_NTPase"/>
</dbReference>
<dbReference type="InterPro" id="IPR020568">
    <property type="entry name" value="Ribosomal_Su5_D2-typ_SF"/>
</dbReference>
<dbReference type="InterPro" id="IPR014721">
    <property type="entry name" value="Ribsml_uS5_D2-typ_fold_subgr"/>
</dbReference>
<dbReference type="InterPro" id="IPR005225">
    <property type="entry name" value="Small_GTP-bd"/>
</dbReference>
<dbReference type="InterPro" id="IPR000795">
    <property type="entry name" value="T_Tr_GTP-bd_dom"/>
</dbReference>
<dbReference type="InterPro" id="IPR009000">
    <property type="entry name" value="Transl_B-barrel_sf"/>
</dbReference>
<dbReference type="InterPro" id="IPR004540">
    <property type="entry name" value="Transl_elong_EFG/EF2"/>
</dbReference>
<dbReference type="InterPro" id="IPR005517">
    <property type="entry name" value="Transl_elong_EFG/EF2_IV"/>
</dbReference>
<dbReference type="NCBIfam" id="TIGR00484">
    <property type="entry name" value="EF-G"/>
    <property type="match status" value="1"/>
</dbReference>
<dbReference type="NCBIfam" id="TIGR00231">
    <property type="entry name" value="small_GTP"/>
    <property type="match status" value="1"/>
</dbReference>
<dbReference type="PANTHER" id="PTHR43636">
    <property type="entry name" value="ELONGATION FACTOR G, MITOCHONDRIAL"/>
    <property type="match status" value="1"/>
</dbReference>
<dbReference type="PANTHER" id="PTHR43636:SF2">
    <property type="entry name" value="ELONGATION FACTOR G, MITOCHONDRIAL"/>
    <property type="match status" value="1"/>
</dbReference>
<dbReference type="Pfam" id="PF00679">
    <property type="entry name" value="EFG_C"/>
    <property type="match status" value="1"/>
</dbReference>
<dbReference type="Pfam" id="PF14492">
    <property type="entry name" value="EFG_III"/>
    <property type="match status" value="1"/>
</dbReference>
<dbReference type="Pfam" id="PF03764">
    <property type="entry name" value="EFG_IV"/>
    <property type="match status" value="1"/>
</dbReference>
<dbReference type="Pfam" id="PF00009">
    <property type="entry name" value="GTP_EFTU"/>
    <property type="match status" value="1"/>
</dbReference>
<dbReference type="Pfam" id="PF03144">
    <property type="entry name" value="GTP_EFTU_D2"/>
    <property type="match status" value="1"/>
</dbReference>
<dbReference type="PRINTS" id="PR00315">
    <property type="entry name" value="ELONGATNFCT"/>
</dbReference>
<dbReference type="SMART" id="SM00838">
    <property type="entry name" value="EFG_C"/>
    <property type="match status" value="1"/>
</dbReference>
<dbReference type="SMART" id="SM00889">
    <property type="entry name" value="EFG_IV"/>
    <property type="match status" value="1"/>
</dbReference>
<dbReference type="SUPFAM" id="SSF54980">
    <property type="entry name" value="EF-G C-terminal domain-like"/>
    <property type="match status" value="2"/>
</dbReference>
<dbReference type="SUPFAM" id="SSF52540">
    <property type="entry name" value="P-loop containing nucleoside triphosphate hydrolases"/>
    <property type="match status" value="1"/>
</dbReference>
<dbReference type="SUPFAM" id="SSF54211">
    <property type="entry name" value="Ribosomal protein S5 domain 2-like"/>
    <property type="match status" value="1"/>
</dbReference>
<dbReference type="SUPFAM" id="SSF50447">
    <property type="entry name" value="Translation proteins"/>
    <property type="match status" value="1"/>
</dbReference>
<dbReference type="PROSITE" id="PS00301">
    <property type="entry name" value="G_TR_1"/>
    <property type="match status" value="1"/>
</dbReference>
<dbReference type="PROSITE" id="PS51722">
    <property type="entry name" value="G_TR_2"/>
    <property type="match status" value="1"/>
</dbReference>
<name>EFGM_CAEBR</name>
<evidence type="ECO:0000250" key="1">
    <source>
        <dbReference type="UniProtKB" id="Q96RP9"/>
    </source>
</evidence>
<evidence type="ECO:0000255" key="2">
    <source>
        <dbReference type="HAMAP-Rule" id="MF_03061"/>
    </source>
</evidence>
<evidence type="ECO:0000305" key="3"/>
<protein>
    <recommendedName>
        <fullName evidence="2">Elongation factor G, mitochondrial</fullName>
        <shortName evidence="2">EF-Gmt</shortName>
        <ecNumber evidence="1">3.6.5.-</ecNumber>
    </recommendedName>
    <alternativeName>
        <fullName evidence="2">Elongation factor G 1, mitochondrial</fullName>
        <shortName evidence="2">mEF-G 1</shortName>
    </alternativeName>
    <alternativeName>
        <fullName evidence="2">Elongation factor G1</fullName>
    </alternativeName>
</protein>
<organism>
    <name type="scientific">Caenorhabditis briggsae</name>
    <dbReference type="NCBI Taxonomy" id="6238"/>
    <lineage>
        <taxon>Eukaryota</taxon>
        <taxon>Metazoa</taxon>
        <taxon>Ecdysozoa</taxon>
        <taxon>Nematoda</taxon>
        <taxon>Chromadorea</taxon>
        <taxon>Rhabditida</taxon>
        <taxon>Rhabditina</taxon>
        <taxon>Rhabditomorpha</taxon>
        <taxon>Rhabditoidea</taxon>
        <taxon>Rhabditidae</taxon>
        <taxon>Peloderinae</taxon>
        <taxon>Caenorhabditis</taxon>
    </lineage>
</organism>
<accession>A8WTI8</accession>
<gene>
    <name type="primary">gfm-1</name>
    <name type="ORF">CBG02783</name>
</gene>
<keyword id="KW-0251">Elongation factor</keyword>
<keyword id="KW-0342">GTP-binding</keyword>
<keyword id="KW-0378">Hydrolase</keyword>
<keyword id="KW-0496">Mitochondrion</keyword>
<keyword id="KW-0547">Nucleotide-binding</keyword>
<keyword id="KW-0648">Protein biosynthesis</keyword>
<keyword id="KW-1185">Reference proteome</keyword>
<keyword id="KW-0809">Transit peptide</keyword>
<reference key="1">
    <citation type="journal article" date="2003" name="PLoS Biol.">
        <title>The genome sequence of Caenorhabditis briggsae: a platform for comparative genomics.</title>
        <authorList>
            <person name="Stein L.D."/>
            <person name="Bao Z."/>
            <person name="Blasiar D."/>
            <person name="Blumenthal T."/>
            <person name="Brent M.R."/>
            <person name="Chen N."/>
            <person name="Chinwalla A."/>
            <person name="Clarke L."/>
            <person name="Clee C."/>
            <person name="Coghlan A."/>
            <person name="Coulson A."/>
            <person name="D'Eustachio P."/>
            <person name="Fitch D.H.A."/>
            <person name="Fulton L.A."/>
            <person name="Fulton R.E."/>
            <person name="Griffiths-Jones S."/>
            <person name="Harris T.W."/>
            <person name="Hillier L.W."/>
            <person name="Kamath R."/>
            <person name="Kuwabara P.E."/>
            <person name="Mardis E.R."/>
            <person name="Marra M.A."/>
            <person name="Miner T.L."/>
            <person name="Minx P."/>
            <person name="Mullikin J.C."/>
            <person name="Plumb R.W."/>
            <person name="Rogers J."/>
            <person name="Schein J.E."/>
            <person name="Sohrmann M."/>
            <person name="Spieth J."/>
            <person name="Stajich J.E."/>
            <person name="Wei C."/>
            <person name="Willey D."/>
            <person name="Wilson R.K."/>
            <person name="Durbin R.M."/>
            <person name="Waterston R.H."/>
        </authorList>
    </citation>
    <scope>NUCLEOTIDE SEQUENCE [LARGE SCALE GENOMIC DNA]</scope>
    <source>
        <strain>AF16</strain>
    </source>
</reference>
<feature type="transit peptide" description="Mitochondrion" evidence="2">
    <location>
        <begin position="1"/>
        <end position="24"/>
    </location>
</feature>
<feature type="chain" id="PRO_0000385541" description="Elongation factor G, mitochondrial">
    <location>
        <begin position="25"/>
        <end position="724"/>
    </location>
</feature>
<feature type="domain" description="tr-type G">
    <location>
        <begin position="41"/>
        <end position="318"/>
    </location>
</feature>
<feature type="binding site" evidence="2">
    <location>
        <begin position="50"/>
        <end position="57"/>
    </location>
    <ligand>
        <name>GTP</name>
        <dbReference type="ChEBI" id="CHEBI:37565"/>
    </ligand>
</feature>
<feature type="binding site" evidence="2">
    <location>
        <begin position="117"/>
        <end position="121"/>
    </location>
    <ligand>
        <name>GTP</name>
        <dbReference type="ChEBI" id="CHEBI:37565"/>
    </ligand>
</feature>
<feature type="binding site" evidence="2">
    <location>
        <begin position="171"/>
        <end position="174"/>
    </location>
    <ligand>
        <name>GTP</name>
        <dbReference type="ChEBI" id="CHEBI:37565"/>
    </ligand>
</feature>
<sequence length="724" mass="81047">MSPLGRFSAVAQSRRQLNNVFRRFTSNEAPSVIVPGVRPIERIRNIGISAHIDSGKTTVTERILYYAGRIDSMHEVRGKDDVGATMDFMELERQRGITIQSAATYVDWHGTNINIIDTPGHVDFTVEVERALRVLDGAVLVLCGVGGVQSQTFTVNRQLARYNVPFICFVNKMDRNGASPLKALDGLRNKLNHNAALVHLPIGKDSNFNGIVDLVEGHALYYEGEGGLIVRKDEIPKDLRVEAEDRRQELIEHIANVDETLGEMFLNDQKPDVKQIHEAIRRTVVKRQFVPVLSGSALKNKGVQTMIDSVVKYLPDPSEVVNRATVKTETGEEKRIILSPERNNDKPFVGLAFKLEAGKYGQLTYFRVYQGQLSKGDTVYASRDGRKVRVQRLVRMHAADMEEITTAYAGDICATFGLDCHSGETFSTDQNLAPHCESMHIPEPVISMAIKPVNRKDADNFIKALTRFTKEDPTFRREYNQEAKETIVSGMGELHLEIYAQRMKSEYNCPVELGKPSVAYRECLGAPYKFHFRHKKQTGGQGQFGEIEGVIDPLPADRNTVVEFSDETFGNNIPKNLFPALKKGLDAIVAEGPLIKSRIAGIHVRIQDGATHAVDSTEIAMINTMQNMMRESFEKASWLLLEPIMKVEVTTPAEFQGNVVTSALSDMFGYTSELRSLTEGKGEFSMEYSRYAPTSLEAQDRVQAEWRQLHGIADPNEKGKKKKK</sequence>
<proteinExistence type="inferred from homology"/>